<name>ATPE_TUPAK</name>
<reference key="1">
    <citation type="journal article" date="2005" name="Mol. Biol. Evol.">
        <title>The chloroplast genome sequence of the green alga Pseudendoclonium akinetum (Ulvophyceae) reveals unusual structural features and new insights into the branching order of chlorophyte lineages.</title>
        <authorList>
            <person name="Pombert J.-F."/>
            <person name="Otis C."/>
            <person name="Lemieux C."/>
            <person name="Turmel M."/>
        </authorList>
    </citation>
    <scope>NUCLEOTIDE SEQUENCE [LARGE SCALE GENOMIC DNA]</scope>
    <source>
        <strain>UTEX 1912</strain>
    </source>
</reference>
<proteinExistence type="inferred from homology"/>
<comment type="function">
    <text evidence="1">Produces ATP from ADP in the presence of a proton gradient across the membrane.</text>
</comment>
<comment type="subunit">
    <text evidence="1">F-type ATPases have 2 components, CF(1) - the catalytic core - and CF(0) - the membrane proton channel. CF(1) has five subunits: alpha(3), beta(3), gamma(1), delta(1), epsilon(1). CF(0) has three main subunits: a, b and c.</text>
</comment>
<comment type="subcellular location">
    <subcellularLocation>
        <location evidence="1">Plastid</location>
        <location evidence="1">Chloroplast thylakoid membrane</location>
        <topology evidence="1">Peripheral membrane protein</topology>
    </subcellularLocation>
</comment>
<comment type="similarity">
    <text evidence="1">Belongs to the ATPase epsilon chain family.</text>
</comment>
<sequence>MSLQICILTPDRVFWNQEAEEIILPTNTGQMGVLTNHAPIITALDIGIMSIRTQKDWTSVALMGGFALVKQNQVTVLVNSAESKETINSSEAEQAFLEAKEQLEKALGQKEKVEANFAFKRARARYQLVS</sequence>
<gene>
    <name evidence="1" type="primary">atpE</name>
</gene>
<keyword id="KW-0066">ATP synthesis</keyword>
<keyword id="KW-0139">CF(1)</keyword>
<keyword id="KW-0150">Chloroplast</keyword>
<keyword id="KW-0375">Hydrogen ion transport</keyword>
<keyword id="KW-0406">Ion transport</keyword>
<keyword id="KW-0472">Membrane</keyword>
<keyword id="KW-0934">Plastid</keyword>
<keyword id="KW-0793">Thylakoid</keyword>
<keyword id="KW-0813">Transport</keyword>
<dbReference type="EMBL" id="AY835431">
    <property type="protein sequence ID" value="AAV80624.1"/>
    <property type="molecule type" value="Genomic_DNA"/>
</dbReference>
<dbReference type="RefSeq" id="YP_636200.1">
    <property type="nucleotide sequence ID" value="NC_008114.1"/>
</dbReference>
<dbReference type="SMR" id="Q3ZJ67"/>
<dbReference type="GeneID" id="4108804"/>
<dbReference type="GO" id="GO:0009535">
    <property type="term" value="C:chloroplast thylakoid membrane"/>
    <property type="evidence" value="ECO:0007669"/>
    <property type="project" value="UniProtKB-SubCell"/>
</dbReference>
<dbReference type="GO" id="GO:0045259">
    <property type="term" value="C:proton-transporting ATP synthase complex"/>
    <property type="evidence" value="ECO:0007669"/>
    <property type="project" value="UniProtKB-KW"/>
</dbReference>
<dbReference type="GO" id="GO:0005524">
    <property type="term" value="F:ATP binding"/>
    <property type="evidence" value="ECO:0007669"/>
    <property type="project" value="UniProtKB-UniRule"/>
</dbReference>
<dbReference type="GO" id="GO:0046933">
    <property type="term" value="F:proton-transporting ATP synthase activity, rotational mechanism"/>
    <property type="evidence" value="ECO:0007669"/>
    <property type="project" value="UniProtKB-UniRule"/>
</dbReference>
<dbReference type="CDD" id="cd12152">
    <property type="entry name" value="F1-ATPase_delta"/>
    <property type="match status" value="1"/>
</dbReference>
<dbReference type="FunFam" id="2.60.15.10:FF:000002">
    <property type="entry name" value="ATP synthase epsilon chain, chloroplastic"/>
    <property type="match status" value="1"/>
</dbReference>
<dbReference type="Gene3D" id="6.10.140.480">
    <property type="match status" value="1"/>
</dbReference>
<dbReference type="Gene3D" id="2.60.15.10">
    <property type="entry name" value="F0F1 ATP synthase delta/epsilon subunit, N-terminal"/>
    <property type="match status" value="1"/>
</dbReference>
<dbReference type="HAMAP" id="MF_00530">
    <property type="entry name" value="ATP_synth_epsil_bac"/>
    <property type="match status" value="1"/>
</dbReference>
<dbReference type="InterPro" id="IPR001469">
    <property type="entry name" value="ATP_synth_F1_dsu/esu"/>
</dbReference>
<dbReference type="InterPro" id="IPR020546">
    <property type="entry name" value="ATP_synth_F1_dsu/esu_N"/>
</dbReference>
<dbReference type="InterPro" id="IPR020547">
    <property type="entry name" value="ATP_synth_F1_esu_C"/>
</dbReference>
<dbReference type="InterPro" id="IPR036771">
    <property type="entry name" value="ATPsynth_dsu/esu_N"/>
</dbReference>
<dbReference type="NCBIfam" id="TIGR01216">
    <property type="entry name" value="ATP_synt_epsi"/>
    <property type="match status" value="1"/>
</dbReference>
<dbReference type="PANTHER" id="PTHR13822">
    <property type="entry name" value="ATP SYNTHASE DELTA/EPSILON CHAIN"/>
    <property type="match status" value="1"/>
</dbReference>
<dbReference type="PANTHER" id="PTHR13822:SF10">
    <property type="entry name" value="ATP SYNTHASE EPSILON CHAIN, CHLOROPLASTIC"/>
    <property type="match status" value="1"/>
</dbReference>
<dbReference type="Pfam" id="PF00401">
    <property type="entry name" value="ATP-synt_DE"/>
    <property type="match status" value="1"/>
</dbReference>
<dbReference type="Pfam" id="PF02823">
    <property type="entry name" value="ATP-synt_DE_N"/>
    <property type="match status" value="1"/>
</dbReference>
<dbReference type="SUPFAM" id="SSF51344">
    <property type="entry name" value="Epsilon subunit of F1F0-ATP synthase N-terminal domain"/>
    <property type="match status" value="1"/>
</dbReference>
<organism>
    <name type="scientific">Tupiella akineta</name>
    <name type="common">Green alga</name>
    <name type="synonym">Pseudendoclonium akinetum</name>
    <dbReference type="NCBI Taxonomy" id="160070"/>
    <lineage>
        <taxon>Eukaryota</taxon>
        <taxon>Viridiplantae</taxon>
        <taxon>Chlorophyta</taxon>
        <taxon>Ulvophyceae</taxon>
        <taxon>OUU clade</taxon>
        <taxon>Ulotrichales</taxon>
        <taxon>Tupiellaceae</taxon>
        <taxon>Tupiella</taxon>
    </lineage>
</organism>
<evidence type="ECO:0000255" key="1">
    <source>
        <dbReference type="HAMAP-Rule" id="MF_00530"/>
    </source>
</evidence>
<geneLocation type="chloroplast"/>
<feature type="chain" id="PRO_0000275215" description="ATP synthase epsilon chain, chloroplastic">
    <location>
        <begin position="1"/>
        <end position="130"/>
    </location>
</feature>
<protein>
    <recommendedName>
        <fullName evidence="1">ATP synthase epsilon chain, chloroplastic</fullName>
    </recommendedName>
    <alternativeName>
        <fullName evidence="1">ATP synthase F1 sector epsilon subunit</fullName>
    </alternativeName>
    <alternativeName>
        <fullName evidence="1">F-ATPase epsilon subunit</fullName>
    </alternativeName>
</protein>
<accession>Q3ZJ67</accession>